<sequence length="240" mass="27586">MKIVEVKNLTYRINDFEILKNVTFSVEEGEFVGIIGPNGAGKTTLVRILVGDIKNYEGKVEVRGKIGYLPQLHQVQREFPITVKEFAAMGMYGRYRKIDWEKVRSTLKDVGILHKENDPIKNLSGGEFQRLSLARALLSDPDILVLDEPEAGVDEMGKASFYELLNRLRKEKNITVIMVSHDIGMVFKECSTIMCLNRTLHCHGPTETINPEDLKKIFTDFDIWIRGTRHYEIYHGRERD</sequence>
<accession>Q9WXX8</accession>
<name>Y124_THEMA</name>
<keyword id="KW-0067">ATP-binding</keyword>
<keyword id="KW-0547">Nucleotide-binding</keyword>
<keyword id="KW-1185">Reference proteome</keyword>
<keyword id="KW-0813">Transport</keyword>
<dbReference type="EMBL" id="AE000512">
    <property type="protein sequence ID" value="AAD35218.1"/>
    <property type="molecule type" value="Genomic_DNA"/>
</dbReference>
<dbReference type="PIR" id="D72415">
    <property type="entry name" value="D72415"/>
</dbReference>
<dbReference type="RefSeq" id="NP_227940.1">
    <property type="nucleotide sequence ID" value="NC_000853.1"/>
</dbReference>
<dbReference type="RefSeq" id="WP_004082707.1">
    <property type="nucleotide sequence ID" value="NC_000853.1"/>
</dbReference>
<dbReference type="SMR" id="Q9WXX8"/>
<dbReference type="FunCoup" id="Q9WXX8">
    <property type="interactions" value="117"/>
</dbReference>
<dbReference type="STRING" id="243274.TM_0124"/>
<dbReference type="PaxDb" id="243274-THEMA_04185"/>
<dbReference type="DNASU" id="896951"/>
<dbReference type="EnsemblBacteria" id="AAD35218">
    <property type="protein sequence ID" value="AAD35218"/>
    <property type="gene ID" value="TM_0124"/>
</dbReference>
<dbReference type="KEGG" id="tma:TM0124"/>
<dbReference type="KEGG" id="tmi:THEMA_04185"/>
<dbReference type="KEGG" id="tmm:Tmari_0122"/>
<dbReference type="KEGG" id="tmw:THMA_0120"/>
<dbReference type="eggNOG" id="COG1121">
    <property type="taxonomic scope" value="Bacteria"/>
</dbReference>
<dbReference type="InParanoid" id="Q9WXX8"/>
<dbReference type="OrthoDB" id="9806726at2"/>
<dbReference type="Proteomes" id="UP000008183">
    <property type="component" value="Chromosome"/>
</dbReference>
<dbReference type="GO" id="GO:0043190">
    <property type="term" value="C:ATP-binding cassette (ABC) transporter complex"/>
    <property type="evidence" value="ECO:0000318"/>
    <property type="project" value="GO_Central"/>
</dbReference>
<dbReference type="GO" id="GO:0005524">
    <property type="term" value="F:ATP binding"/>
    <property type="evidence" value="ECO:0007669"/>
    <property type="project" value="UniProtKB-KW"/>
</dbReference>
<dbReference type="GO" id="GO:0016887">
    <property type="term" value="F:ATP hydrolysis activity"/>
    <property type="evidence" value="ECO:0007669"/>
    <property type="project" value="InterPro"/>
</dbReference>
<dbReference type="GO" id="GO:0042626">
    <property type="term" value="F:ATPase-coupled transmembrane transporter activity"/>
    <property type="evidence" value="ECO:0000318"/>
    <property type="project" value="GO_Central"/>
</dbReference>
<dbReference type="CDD" id="cd03235">
    <property type="entry name" value="ABC_Metallic_Cations"/>
    <property type="match status" value="1"/>
</dbReference>
<dbReference type="Gene3D" id="3.40.50.300">
    <property type="entry name" value="P-loop containing nucleotide triphosphate hydrolases"/>
    <property type="match status" value="1"/>
</dbReference>
<dbReference type="InterPro" id="IPR003593">
    <property type="entry name" value="AAA+_ATPase"/>
</dbReference>
<dbReference type="InterPro" id="IPR003439">
    <property type="entry name" value="ABC_transporter-like_ATP-bd"/>
</dbReference>
<dbReference type="InterPro" id="IPR017871">
    <property type="entry name" value="ABC_transporter-like_CS"/>
</dbReference>
<dbReference type="InterPro" id="IPR050153">
    <property type="entry name" value="Metal_Ion_Import_ABC"/>
</dbReference>
<dbReference type="InterPro" id="IPR027417">
    <property type="entry name" value="P-loop_NTPase"/>
</dbReference>
<dbReference type="PANTHER" id="PTHR42734">
    <property type="entry name" value="METAL TRANSPORT SYSTEM ATP-BINDING PROTEIN TM_0124-RELATED"/>
    <property type="match status" value="1"/>
</dbReference>
<dbReference type="PANTHER" id="PTHR42734:SF17">
    <property type="entry name" value="METAL TRANSPORT SYSTEM ATP-BINDING PROTEIN TM_0124-RELATED"/>
    <property type="match status" value="1"/>
</dbReference>
<dbReference type="Pfam" id="PF00005">
    <property type="entry name" value="ABC_tran"/>
    <property type="match status" value="1"/>
</dbReference>
<dbReference type="SMART" id="SM00382">
    <property type="entry name" value="AAA"/>
    <property type="match status" value="1"/>
</dbReference>
<dbReference type="SUPFAM" id="SSF52540">
    <property type="entry name" value="P-loop containing nucleoside triphosphate hydrolases"/>
    <property type="match status" value="1"/>
</dbReference>
<dbReference type="PROSITE" id="PS00211">
    <property type="entry name" value="ABC_TRANSPORTER_1"/>
    <property type="match status" value="1"/>
</dbReference>
<dbReference type="PROSITE" id="PS50893">
    <property type="entry name" value="ABC_TRANSPORTER_2"/>
    <property type="match status" value="1"/>
</dbReference>
<reference key="1">
    <citation type="journal article" date="1999" name="Nature">
        <title>Evidence for lateral gene transfer between Archaea and Bacteria from genome sequence of Thermotoga maritima.</title>
        <authorList>
            <person name="Nelson K.E."/>
            <person name="Clayton R.A."/>
            <person name="Gill S.R."/>
            <person name="Gwinn M.L."/>
            <person name="Dodson R.J."/>
            <person name="Haft D.H."/>
            <person name="Hickey E.K."/>
            <person name="Peterson J.D."/>
            <person name="Nelson W.C."/>
            <person name="Ketchum K.A."/>
            <person name="McDonald L.A."/>
            <person name="Utterback T.R."/>
            <person name="Malek J.A."/>
            <person name="Linher K.D."/>
            <person name="Garrett M.M."/>
            <person name="Stewart A.M."/>
            <person name="Cotton M.D."/>
            <person name="Pratt M.S."/>
            <person name="Phillips C.A."/>
            <person name="Richardson D.L."/>
            <person name="Heidelberg J.F."/>
            <person name="Sutton G.G."/>
            <person name="Fleischmann R.D."/>
            <person name="Eisen J.A."/>
            <person name="White O."/>
            <person name="Salzberg S.L."/>
            <person name="Smith H.O."/>
            <person name="Venter J.C."/>
            <person name="Fraser C.M."/>
        </authorList>
    </citation>
    <scope>NUCLEOTIDE SEQUENCE [LARGE SCALE GENOMIC DNA]</scope>
    <source>
        <strain>ATCC 43589 / DSM 3109 / JCM 10099 / NBRC 100826 / MSB8</strain>
    </source>
</reference>
<feature type="chain" id="PRO_0000093278" description="Probable metal transport system ATP-binding protein TM_0124">
    <location>
        <begin position="1"/>
        <end position="240"/>
    </location>
</feature>
<feature type="domain" description="ABC transporter" evidence="1">
    <location>
        <begin position="4"/>
        <end position="223"/>
    </location>
</feature>
<feature type="binding site" evidence="1">
    <location>
        <begin position="36"/>
        <end position="43"/>
    </location>
    <ligand>
        <name>ATP</name>
        <dbReference type="ChEBI" id="CHEBI:30616"/>
    </ligand>
</feature>
<comment type="function">
    <text>Part of an ATP-driven transport system TM_0123/TM_0124/TM_0125 for a metal. Probably responsible for energy coupling to the transport system.</text>
</comment>
<comment type="similarity">
    <text evidence="2">Belongs to the ABC transporter superfamily.</text>
</comment>
<protein>
    <recommendedName>
        <fullName>Probable metal transport system ATP-binding protein TM_0124</fullName>
    </recommendedName>
</protein>
<organism>
    <name type="scientific">Thermotoga maritima (strain ATCC 43589 / DSM 3109 / JCM 10099 / NBRC 100826 / MSB8)</name>
    <dbReference type="NCBI Taxonomy" id="243274"/>
    <lineage>
        <taxon>Bacteria</taxon>
        <taxon>Thermotogati</taxon>
        <taxon>Thermotogota</taxon>
        <taxon>Thermotogae</taxon>
        <taxon>Thermotogales</taxon>
        <taxon>Thermotogaceae</taxon>
        <taxon>Thermotoga</taxon>
    </lineage>
</organism>
<evidence type="ECO:0000255" key="1">
    <source>
        <dbReference type="PROSITE-ProRule" id="PRU00434"/>
    </source>
</evidence>
<evidence type="ECO:0000305" key="2"/>
<proteinExistence type="inferred from homology"/>
<gene>
    <name type="ordered locus">TM_0124</name>
</gene>